<protein>
    <recommendedName>
        <fullName>Calcium and integrin-binding protein 1</fullName>
        <shortName>CIB</shortName>
    </recommendedName>
    <alternativeName>
        <fullName>Calmyrin</fullName>
    </alternativeName>
    <alternativeName>
        <fullName>DNA-PKcs-interacting protein</fullName>
    </alternativeName>
    <alternativeName>
        <fullName>Kinase-interacting protein</fullName>
        <shortName>KIP</shortName>
    </alternativeName>
</protein>
<evidence type="ECO:0000250" key="1"/>
<evidence type="ECO:0000250" key="2">
    <source>
        <dbReference type="UniProtKB" id="Q99828"/>
    </source>
</evidence>
<evidence type="ECO:0000255" key="3">
    <source>
        <dbReference type="PROSITE-ProRule" id="PRU00448"/>
    </source>
</evidence>
<evidence type="ECO:0000269" key="4">
    <source>
    </source>
</evidence>
<evidence type="ECO:0000269" key="5">
    <source>
    </source>
</evidence>
<evidence type="ECO:0000269" key="6">
    <source>
    </source>
</evidence>
<sequence>MGGSGSRLSKELLAEYQDLTFLTKQEILLAHRRFCELLPPEHRTVEESLHTRVSFEQILSLPELKANPFKERICMVFSTSPTRDSLSFEDFLDLLSVFSDTATPDIKSHYAFRIFDFDDDGTLDREDLSRLVNCLTGEGEDTRLSASEMKQLIDNILEESDIDRDGTINLSEFQHVISRSPDFASSFKIVL</sequence>
<name>CIB1_RAT</name>
<gene>
    <name type="primary">Cib1</name>
    <name type="synonym">Cib</name>
    <name type="synonym">Kip</name>
    <name type="synonym">Prkdcip</name>
</gene>
<comment type="function">
    <text evidence="1 2 4">Calcium-binding protein that plays a role in the regulation of numerous cellular processes, such as cell differentiation, cell division, cell proliferation, cell migration, thrombosis, angiogenesis, cardiac hypertrophy and apoptosis. Involved in bone marrow megakaryocyte differentiation by negatively regulating thrombopoietin-mediated signaling pathway. Participates in the endomitotic cell cycle of megakaryocyte, a form of mitosis in which both karyokinesis and cytokinesis are interrupted. Plays a role in integrin signaling by negatively regulating alpha-IIb/beta3 activation in thrombin-stimulated megakaryocytes preventing platelet aggregation. Up-regulates PTK2/FAK1 activity, and is also needed for the recruitment of PTK2/FAK1 to focal adhesions; it thus appears to play an important role in focal adhesion formation. Positively regulates cell migration on fibronectin in a CDC42-dependent manner, the effect being negatively regulated by PAK1. Functions as a negative regulator of stress activated MAP kinase (MAPK) signaling pathways. Down-regulates inositol 1,4,5-trisphosphate receptor-dependent calcium signaling. Involved in sphingosine kinase SPHK1 translocation to the plasma membrane in a N-myristoylation-dependent manner preventing TNF-alpha-induced apoptosis. Regulates serine/threonine-protein kinase PLK3 activity for proper completion of cell division progression. Plays a role in microtubule (MT) dynamics during neuronal development; disrupts the MT depolymerization activity of STMN2 attenuating NGF-induced neurite outgrowth and the MT reorganization at the edge of lamellipodia. Promotes cardiomyocyte hypertrophy via activation of the calcineurin/NFAT signaling pathway. Stimulates calcineurin PPP3R1 activity by mediating its anchoring to the sarcolemma. In ischemia-induced (pathological or adaptive) angiogenesis, stimulates endothelial cell proliferation, migration and microvessel formation by activating the PAK1 and ERK1/ERK2 signaling pathway. Also promotes cancer cell survival and proliferation. May regulate cell cycle and differentiation of spermatogenic germ cells, and/or differentiation of supporting Sertoli cells (By similarity). Forms a complex with TMC6/EVER1 and TMC8/EVER2 in lymphocytes and keratynocytes where CIB1 stabilizes TMC6 and TMC8 levels and reciprocally (By similarity).</text>
</comment>
<comment type="subunit">
    <text evidence="1 2 4">Monomer. Interacts with the heterodimeric integrin alpha-IIb/beta3 (ITGA2B-ITGB3). Interacts with ITGA2B (via cytoplasmic domain); the interaction is direct and calcium-dependent. Interacts with the protein kinases PLK2/SNK and PRKDC (via the region immediately upstream of the kinase domain). Interacts with PLK3; the interaction inhibits PLK3 kinase activity. Interacts with PSEN2. Interacts (via C-terminus) with F8. Interacts with NBR1 (via C-terminus). Interacts with FEZ1 (via C-terminus). Interacts with UBR5 (via C-terminus); the interaction is sensitive to DNA damage, and may target CIB1 for ubiquitin-mediated degradation. Interacts with IFI6; the interaction is direct. Interacts with BCL2. Interacts with ITPR3; the interaction occurs in a calcium dependent manner. Interacts with PTK2/FAK1. Interacts with MAP3K5; the interaction inhibits MAP3K5 activation by phosphorylation, and its subsequent interaction with TRAF2. Interacts (via C-terminal region) with STMN2 (via the N-terminal region); the interaction is direct, occurs in a calcium-dependent manner and attenuates the STMN2-induced neurite outgrowth inhibition. Interacts with SPHK1, the interaction occurs in a calcium-dependent manner. Interacts with ITGA2B (via C-terminal cytoplasmic tail); the interaction occurs upon platelet aggregation and is stabilized/increased in a calcium and magnesium-dependent manner. Interacts with PAK1 (via N-terminal region); the interaction is direct and occurs in a calcium-dependent manner. Interacts with RAC3 (via C-terminal region); the interaction induces their association with the cytoskeleton upon alpha-IIb/beta3 integrin-mediated adhesion. Interacts with ITGA5 and ITGAV. Interacts with MYO1C. Interacts with ITGA2B (via C-terminal cytoplasmic tail region). Interacts (via C-terminal region) with PPP3R1; the interaction increases upon cardiomyocytes hypertrophy. Interacts with CACNA1C; the interaction increases upon cardiomyocytes hypertrophy (By similarity). Interacts with TAS1R2 (via C-terminus); this interaction is independent of the myristoylation state of CIB1. Interacts and forms a complex with TMC6 and TMC8; the interaction stabilizes each component of the complex (By similarity).</text>
</comment>
<comment type="subcellular location">
    <subcellularLocation>
        <location evidence="2">Membrane</location>
        <topology evidence="2">Lipid-anchor</topology>
    </subcellularLocation>
    <subcellularLocation>
        <location evidence="2">Cell membrane</location>
        <location evidence="2">Sarcolemma</location>
    </subcellularLocation>
    <subcellularLocation>
        <location evidence="2">Cell membrane</location>
    </subcellularLocation>
    <subcellularLocation>
        <location evidence="2">Apical cell membrane</location>
    </subcellularLocation>
    <subcellularLocation>
        <location evidence="2">Cell projection</location>
        <location evidence="2">Ruffle membrane</location>
    </subcellularLocation>
    <subcellularLocation>
        <location evidence="2">Cell projection</location>
        <location evidence="2">Filopodium tip</location>
    </subcellularLocation>
    <subcellularLocation>
        <location evidence="2">Cell projection</location>
        <location evidence="2">Growth cone</location>
    </subcellularLocation>
    <subcellularLocation>
        <location evidence="2">Cell projection</location>
        <location evidence="2">Lamellipodium</location>
    </subcellularLocation>
    <subcellularLocation>
        <location evidence="2">Cytoplasm</location>
    </subcellularLocation>
    <subcellularLocation>
        <location evidence="2">Cytoplasm</location>
        <location evidence="2">Cytoskeleton</location>
    </subcellularLocation>
    <subcellularLocation>
        <location evidence="2">Cytoplasm</location>
        <location evidence="2">Cytoskeleton</location>
        <location evidence="2">Microtubule organizing center</location>
        <location evidence="2">Centrosome</location>
    </subcellularLocation>
    <subcellularLocation>
        <location evidence="2">Cytoplasm</location>
        <location evidence="2">Perinuclear region</location>
    </subcellularLocation>
    <subcellularLocation>
        <location evidence="2">Nucleus</location>
    </subcellularLocation>
    <subcellularLocation>
        <location evidence="2">Cell projection</location>
        <location evidence="2">Neuron projection</location>
    </subcellularLocation>
    <subcellularLocation>
        <location evidence="2">Perikaryon</location>
    </subcellularLocation>
    <text evidence="1">Colocalized with PPP3R1 at the cell membrane of cardiomyocytes in the hypertrophic heart (By similarity). Colocalized with NBR1 to the perinuclear region. Colocalizes with TAS1R2 in apical regions of taste receptor cells. Colocalized with RAC3 in the perinuclear area and at the cell periphery. Colocalized with PAK1 within membrane ruffles during cell spreading upon readhesion to fibronectin. Redistributed to the cytoskeleton upon platelet aggregation. Translocates from the cytosol to the plasma membrane in a calcium-dependent manner. Colocalized with PLK3 at centrosomes in ductal breast carcinoma cells.</text>
</comment>
<comment type="tissue specificity">
    <text evidence="5 6">Expressed in cardiomyocytes and neurons (at protein level). Expressed during early neural development.</text>
</comment>
<comment type="domain">
    <text evidence="1">The EF-hands may also bind magnesium ions in the presence of high Mg(2+) levels and low Ca(2+) levels.</text>
</comment>
<comment type="miscellaneous">
    <text evidence="1">The binding of either calcium or magnesium significantly increases the structural stability of the protein in comparison to apo-CIB (calcium- and magnesium-free form).</text>
</comment>
<accession>Q9R010</accession>
<accession>Q5BKA8</accession>
<organism>
    <name type="scientific">Rattus norvegicus</name>
    <name type="common">Rat</name>
    <dbReference type="NCBI Taxonomy" id="10116"/>
    <lineage>
        <taxon>Eukaryota</taxon>
        <taxon>Metazoa</taxon>
        <taxon>Chordata</taxon>
        <taxon>Craniata</taxon>
        <taxon>Vertebrata</taxon>
        <taxon>Euteleostomi</taxon>
        <taxon>Mammalia</taxon>
        <taxon>Eutheria</taxon>
        <taxon>Euarchontoglires</taxon>
        <taxon>Glires</taxon>
        <taxon>Rodentia</taxon>
        <taxon>Myomorpha</taxon>
        <taxon>Muroidea</taxon>
        <taxon>Muridae</taxon>
        <taxon>Murinae</taxon>
        <taxon>Rattus</taxon>
    </lineage>
</organism>
<proteinExistence type="evidence at protein level"/>
<reference key="1">
    <citation type="journal article" date="1999" name="EMBO J.">
        <title>The polo-like protein kinases Fnk and Snk associate with a Ca(2+)- and integrin-binding protein and are regulated dynamically with synaptic plasticity.</title>
        <authorList>
            <person name="Kauselmann G."/>
            <person name="Weiler M."/>
            <person name="Wulff P."/>
            <person name="Jessberger S."/>
            <person name="Konietzko U."/>
            <person name="Scafidi J."/>
            <person name="Staubli U."/>
            <person name="Bereiter-Hahn J."/>
            <person name="Strebhardt K."/>
            <person name="Kuhl D."/>
        </authorList>
    </citation>
    <scope>NUCLEOTIDE SEQUENCE [MRNA]</scope>
</reference>
<reference key="2">
    <citation type="journal article" date="2004" name="Genome Res.">
        <title>The status, quality, and expansion of the NIH full-length cDNA project: the Mammalian Gene Collection (MGC).</title>
        <authorList>
            <consortium name="The MGC Project Team"/>
        </authorList>
    </citation>
    <scope>NUCLEOTIDE SEQUENCE [LARGE SCALE MRNA]</scope>
    <source>
        <tissue>Ovary</tissue>
    </source>
</reference>
<reference key="3">
    <citation type="journal article" date="2008" name="J. Neurochem.">
        <title>Sweet taste receptor interacting protein CIB1 is a general inhibitor of InsP3-dependent Ca2+ release in vivo.</title>
        <authorList>
            <person name="Hennigs J.K."/>
            <person name="Burhenne N."/>
            <person name="Staehler F."/>
            <person name="Winnig M."/>
            <person name="Walter B."/>
            <person name="Meyerhof W."/>
            <person name="Schmale H."/>
        </authorList>
    </citation>
    <scope>FUNCTION</scope>
    <scope>INTERACTION WITH TAS1R2</scope>
    <scope>MYRISTOYLATION AT GLY-2</scope>
    <scope>SUBCELLULAR LOCATION</scope>
</reference>
<reference key="4">
    <citation type="journal article" date="2010" name="Nat. Med.">
        <title>CIB1 is a regulator of pathological cardiac hypertrophy.</title>
        <authorList>
            <person name="Heineke J."/>
            <person name="Auger-Messier M."/>
            <person name="Correll R.N."/>
            <person name="Xu J."/>
            <person name="Benard M.J."/>
            <person name="Yuan W."/>
            <person name="Drexler H."/>
            <person name="Parise L.V."/>
            <person name="Molkentin J.D."/>
        </authorList>
    </citation>
    <scope>TISSUE SPECIFICITY</scope>
</reference>
<reference key="5">
    <citation type="journal article" date="2011" name="Biochim. Biophys. Acta">
        <title>Calmyrin1 binds to SCG10 protein (stathmin2) to modulate neurite outgrowth.</title>
        <authorList>
            <person name="Sobczak A."/>
            <person name="Debowska K."/>
            <person name="Blazejczyk M."/>
            <person name="Kreutz M.R."/>
            <person name="Kuznicki J."/>
            <person name="Wojda U."/>
        </authorList>
    </citation>
    <scope>SUBCELLULAR LOCATION</scope>
    <scope>TISSUE SPECIFICITY</scope>
</reference>
<dbReference type="EMBL" id="AF136585">
    <property type="protein sequence ID" value="AAF08368.1"/>
    <property type="molecule type" value="mRNA"/>
</dbReference>
<dbReference type="EMBL" id="BC091143">
    <property type="protein sequence ID" value="AAH91143.1"/>
    <property type="molecule type" value="mRNA"/>
</dbReference>
<dbReference type="RefSeq" id="NP_112407.1">
    <property type="nucleotide sequence ID" value="NM_031145.2"/>
</dbReference>
<dbReference type="SMR" id="Q9R010"/>
<dbReference type="BioGRID" id="249681">
    <property type="interactions" value="2"/>
</dbReference>
<dbReference type="FunCoup" id="Q9R010">
    <property type="interactions" value="246"/>
</dbReference>
<dbReference type="IntAct" id="Q9R010">
    <property type="interactions" value="2"/>
</dbReference>
<dbReference type="MINT" id="Q9R010"/>
<dbReference type="STRING" id="10116.ENSRNOP00000047025"/>
<dbReference type="iPTMnet" id="Q9R010"/>
<dbReference type="PhosphoSitePlus" id="Q9R010"/>
<dbReference type="PaxDb" id="10116-ENSRNOP00000047025"/>
<dbReference type="GeneID" id="81823"/>
<dbReference type="KEGG" id="rno:81823"/>
<dbReference type="UCSC" id="RGD:620133">
    <property type="organism name" value="rat"/>
</dbReference>
<dbReference type="AGR" id="RGD:620133"/>
<dbReference type="CTD" id="10519"/>
<dbReference type="RGD" id="620133">
    <property type="gene designation" value="Cib1"/>
</dbReference>
<dbReference type="VEuPathDB" id="HostDB:ENSRNOG00000033498"/>
<dbReference type="eggNOG" id="KOG0034">
    <property type="taxonomic scope" value="Eukaryota"/>
</dbReference>
<dbReference type="HOGENOM" id="CLU_061288_6_1_1"/>
<dbReference type="InParanoid" id="Q9R010"/>
<dbReference type="PhylomeDB" id="Q9R010"/>
<dbReference type="TreeFam" id="TF313865"/>
<dbReference type="PRO" id="PR:Q9R010"/>
<dbReference type="Proteomes" id="UP000002494">
    <property type="component" value="Chromosome 1"/>
</dbReference>
<dbReference type="Bgee" id="ENSRNOG00000033498">
    <property type="expression patterns" value="Expressed in jejunum and 20 other cell types or tissues"/>
</dbReference>
<dbReference type="GO" id="GO:0016324">
    <property type="term" value="C:apical plasma membrane"/>
    <property type="evidence" value="ECO:0007669"/>
    <property type="project" value="UniProtKB-SubCell"/>
</dbReference>
<dbReference type="GO" id="GO:0030424">
    <property type="term" value="C:axon"/>
    <property type="evidence" value="ECO:0000314"/>
    <property type="project" value="RGD"/>
</dbReference>
<dbReference type="GO" id="GO:0071944">
    <property type="term" value="C:cell periphery"/>
    <property type="evidence" value="ECO:0000250"/>
    <property type="project" value="UniProtKB"/>
</dbReference>
<dbReference type="GO" id="GO:0005813">
    <property type="term" value="C:centrosome"/>
    <property type="evidence" value="ECO:0000250"/>
    <property type="project" value="UniProtKB"/>
</dbReference>
<dbReference type="GO" id="GO:0005737">
    <property type="term" value="C:cytoplasm"/>
    <property type="evidence" value="ECO:0000250"/>
    <property type="project" value="HGNC-UCL"/>
</dbReference>
<dbReference type="GO" id="GO:0030425">
    <property type="term" value="C:dendrite"/>
    <property type="evidence" value="ECO:0000314"/>
    <property type="project" value="RGD"/>
</dbReference>
<dbReference type="GO" id="GO:0005783">
    <property type="term" value="C:endoplasmic reticulum"/>
    <property type="evidence" value="ECO:0000250"/>
    <property type="project" value="HGNC-UCL"/>
</dbReference>
<dbReference type="GO" id="GO:0032433">
    <property type="term" value="C:filopodium tip"/>
    <property type="evidence" value="ECO:0000250"/>
    <property type="project" value="UniProtKB"/>
</dbReference>
<dbReference type="GO" id="GO:0030426">
    <property type="term" value="C:growth cone"/>
    <property type="evidence" value="ECO:0000250"/>
    <property type="project" value="UniProtKB"/>
</dbReference>
<dbReference type="GO" id="GO:0030027">
    <property type="term" value="C:lamellipodium"/>
    <property type="evidence" value="ECO:0000250"/>
    <property type="project" value="UniProtKB"/>
</dbReference>
<dbReference type="GO" id="GO:0016020">
    <property type="term" value="C:membrane"/>
    <property type="evidence" value="ECO:0000250"/>
    <property type="project" value="HGNC-UCL"/>
</dbReference>
<dbReference type="GO" id="GO:0043005">
    <property type="term" value="C:neuron projection"/>
    <property type="evidence" value="ECO:0000250"/>
    <property type="project" value="UniProtKB"/>
</dbReference>
<dbReference type="GO" id="GO:0043025">
    <property type="term" value="C:neuronal cell body"/>
    <property type="evidence" value="ECO:0000314"/>
    <property type="project" value="RGD"/>
</dbReference>
<dbReference type="GO" id="GO:0005654">
    <property type="term" value="C:nucleoplasm"/>
    <property type="evidence" value="ECO:0000250"/>
    <property type="project" value="HGNC-UCL"/>
</dbReference>
<dbReference type="GO" id="GO:0005634">
    <property type="term" value="C:nucleus"/>
    <property type="evidence" value="ECO:0000250"/>
    <property type="project" value="UniProtKB"/>
</dbReference>
<dbReference type="GO" id="GO:0043204">
    <property type="term" value="C:perikaryon"/>
    <property type="evidence" value="ECO:0007669"/>
    <property type="project" value="UniProtKB-SubCell"/>
</dbReference>
<dbReference type="GO" id="GO:0048471">
    <property type="term" value="C:perinuclear region of cytoplasm"/>
    <property type="evidence" value="ECO:0000250"/>
    <property type="project" value="UniProtKB"/>
</dbReference>
<dbReference type="GO" id="GO:0005886">
    <property type="term" value="C:plasma membrane"/>
    <property type="evidence" value="ECO:0000250"/>
    <property type="project" value="UniProtKB"/>
</dbReference>
<dbReference type="GO" id="GO:0032587">
    <property type="term" value="C:ruffle membrane"/>
    <property type="evidence" value="ECO:0007669"/>
    <property type="project" value="UniProtKB-SubCell"/>
</dbReference>
<dbReference type="GO" id="GO:0042383">
    <property type="term" value="C:sarcolemma"/>
    <property type="evidence" value="ECO:0000266"/>
    <property type="project" value="RGD"/>
</dbReference>
<dbReference type="GO" id="GO:0005509">
    <property type="term" value="F:calcium ion binding"/>
    <property type="evidence" value="ECO:0000250"/>
    <property type="project" value="HGNC-UCL"/>
</dbReference>
<dbReference type="GO" id="GO:0008427">
    <property type="term" value="F:calcium-dependent protein kinase inhibitor activity"/>
    <property type="evidence" value="ECO:0000266"/>
    <property type="project" value="RGD"/>
</dbReference>
<dbReference type="GO" id="GO:0000287">
    <property type="term" value="F:magnesium ion binding"/>
    <property type="evidence" value="ECO:0000318"/>
    <property type="project" value="GO_Central"/>
</dbReference>
<dbReference type="GO" id="GO:0019901">
    <property type="term" value="F:protein kinase binding"/>
    <property type="evidence" value="ECO:0000353"/>
    <property type="project" value="RGD"/>
</dbReference>
<dbReference type="GO" id="GO:0030291">
    <property type="term" value="F:protein serine/threonine kinase inhibitor activity"/>
    <property type="evidence" value="ECO:0000266"/>
    <property type="project" value="RGD"/>
</dbReference>
<dbReference type="GO" id="GO:0043495">
    <property type="term" value="F:protein-membrane adaptor activity"/>
    <property type="evidence" value="ECO:0000266"/>
    <property type="project" value="RGD"/>
</dbReference>
<dbReference type="GO" id="GO:0031267">
    <property type="term" value="F:small GTPase binding"/>
    <property type="evidence" value="ECO:0000266"/>
    <property type="project" value="RGD"/>
</dbReference>
<dbReference type="GO" id="GO:0044325">
    <property type="term" value="F:transmembrane transporter binding"/>
    <property type="evidence" value="ECO:0000266"/>
    <property type="project" value="RGD"/>
</dbReference>
<dbReference type="GO" id="GO:0001525">
    <property type="term" value="P:angiogenesis"/>
    <property type="evidence" value="ECO:0007669"/>
    <property type="project" value="UniProtKB-KW"/>
</dbReference>
<dbReference type="GO" id="GO:0006915">
    <property type="term" value="P:apoptotic process"/>
    <property type="evidence" value="ECO:0000250"/>
    <property type="project" value="HGNC-UCL"/>
</dbReference>
<dbReference type="GO" id="GO:0007155">
    <property type="term" value="P:cell adhesion"/>
    <property type="evidence" value="ECO:0007669"/>
    <property type="project" value="UniProtKB-KW"/>
</dbReference>
<dbReference type="GO" id="GO:0051301">
    <property type="term" value="P:cell division"/>
    <property type="evidence" value="ECO:0007669"/>
    <property type="project" value="UniProtKB-KW"/>
</dbReference>
<dbReference type="GO" id="GO:0071363">
    <property type="term" value="P:cellular response to growth factor stimulus"/>
    <property type="evidence" value="ECO:0000250"/>
    <property type="project" value="UniProtKB"/>
</dbReference>
<dbReference type="GO" id="GO:1990090">
    <property type="term" value="P:cellular response to nerve growth factor stimulus"/>
    <property type="evidence" value="ECO:0000250"/>
    <property type="project" value="UniProtKB"/>
</dbReference>
<dbReference type="GO" id="GO:0071356">
    <property type="term" value="P:cellular response to tumor necrosis factor"/>
    <property type="evidence" value="ECO:0000250"/>
    <property type="project" value="UniProtKB"/>
</dbReference>
<dbReference type="GO" id="GO:0031122">
    <property type="term" value="P:cytoplasmic microtubule organization"/>
    <property type="evidence" value="ECO:0000250"/>
    <property type="project" value="UniProtKB"/>
</dbReference>
<dbReference type="GO" id="GO:0006974">
    <property type="term" value="P:DNA damage response"/>
    <property type="evidence" value="ECO:0000250"/>
    <property type="project" value="HGNC-UCL"/>
</dbReference>
<dbReference type="GO" id="GO:0007113">
    <property type="term" value="P:endomitotic cell cycle"/>
    <property type="evidence" value="ECO:0000250"/>
    <property type="project" value="UniProtKB"/>
</dbReference>
<dbReference type="GO" id="GO:0043066">
    <property type="term" value="P:negative regulation of apoptotic process"/>
    <property type="evidence" value="ECO:0000250"/>
    <property type="project" value="UniProtKB"/>
</dbReference>
<dbReference type="GO" id="GO:0008285">
    <property type="term" value="P:negative regulation of cell population proliferation"/>
    <property type="evidence" value="ECO:0000250"/>
    <property type="project" value="UniProtKB"/>
</dbReference>
<dbReference type="GO" id="GO:0045653">
    <property type="term" value="P:negative regulation of megakaryocyte differentiation"/>
    <property type="evidence" value="ECO:0000250"/>
    <property type="project" value="UniProtKB"/>
</dbReference>
<dbReference type="GO" id="GO:0007026">
    <property type="term" value="P:negative regulation of microtubule depolymerization"/>
    <property type="evidence" value="ECO:0000250"/>
    <property type="project" value="UniProtKB"/>
</dbReference>
<dbReference type="GO" id="GO:0010977">
    <property type="term" value="P:negative regulation of neuron projection development"/>
    <property type="evidence" value="ECO:0000250"/>
    <property type="project" value="UniProtKB"/>
</dbReference>
<dbReference type="GO" id="GO:0051898">
    <property type="term" value="P:negative regulation of phosphatidylinositol 3-kinase/protein kinase B signal transduction"/>
    <property type="evidence" value="ECO:0000250"/>
    <property type="project" value="UniProtKB"/>
</dbReference>
<dbReference type="GO" id="GO:0001933">
    <property type="term" value="P:negative regulation of protein phosphorylation"/>
    <property type="evidence" value="ECO:0000250"/>
    <property type="project" value="UniProtKB"/>
</dbReference>
<dbReference type="GO" id="GO:0030220">
    <property type="term" value="P:platelet formation"/>
    <property type="evidence" value="ECO:0000250"/>
    <property type="project" value="UniProtKB"/>
</dbReference>
<dbReference type="GO" id="GO:0070886">
    <property type="term" value="P:positive regulation of calcineurin-NFAT signaling cascade"/>
    <property type="evidence" value="ECO:0000315"/>
    <property type="project" value="BHF-UCL"/>
</dbReference>
<dbReference type="GO" id="GO:0043085">
    <property type="term" value="P:positive regulation of catalytic activity"/>
    <property type="evidence" value="ECO:0000250"/>
    <property type="project" value="UniProtKB"/>
</dbReference>
<dbReference type="GO" id="GO:0033630">
    <property type="term" value="P:positive regulation of cell adhesion mediated by integrin"/>
    <property type="evidence" value="ECO:0000250"/>
    <property type="project" value="UniProtKB"/>
</dbReference>
<dbReference type="GO" id="GO:0030307">
    <property type="term" value="P:positive regulation of cell growth"/>
    <property type="evidence" value="ECO:0000250"/>
    <property type="project" value="UniProtKB"/>
</dbReference>
<dbReference type="GO" id="GO:0030335">
    <property type="term" value="P:positive regulation of cell migration"/>
    <property type="evidence" value="ECO:0000250"/>
    <property type="project" value="UniProtKB"/>
</dbReference>
<dbReference type="GO" id="GO:0090050">
    <property type="term" value="P:positive regulation of cell migration involved in sprouting angiogenesis"/>
    <property type="evidence" value="ECO:0000250"/>
    <property type="project" value="UniProtKB"/>
</dbReference>
<dbReference type="GO" id="GO:0008284">
    <property type="term" value="P:positive regulation of cell population proliferation"/>
    <property type="evidence" value="ECO:0000250"/>
    <property type="project" value="UniProtKB"/>
</dbReference>
<dbReference type="GO" id="GO:0001954">
    <property type="term" value="P:positive regulation of cell-matrix adhesion"/>
    <property type="evidence" value="ECO:0000250"/>
    <property type="project" value="UniProtKB"/>
</dbReference>
<dbReference type="GO" id="GO:0070374">
    <property type="term" value="P:positive regulation of ERK1 and ERK2 cascade"/>
    <property type="evidence" value="ECO:0000250"/>
    <property type="project" value="UniProtKB"/>
</dbReference>
<dbReference type="GO" id="GO:2000256">
    <property type="term" value="P:positive regulation of male germ cell proliferation"/>
    <property type="evidence" value="ECO:0000250"/>
    <property type="project" value="UniProtKB"/>
</dbReference>
<dbReference type="GO" id="GO:0051092">
    <property type="term" value="P:positive regulation of NF-kappaB transcription factor activity"/>
    <property type="evidence" value="ECO:0000250"/>
    <property type="project" value="UniProtKB"/>
</dbReference>
<dbReference type="GO" id="GO:1903078">
    <property type="term" value="P:positive regulation of protein localization to plasma membrane"/>
    <property type="evidence" value="ECO:0000266"/>
    <property type="project" value="RGD"/>
</dbReference>
<dbReference type="GO" id="GO:0001934">
    <property type="term" value="P:positive regulation of protein phosphorylation"/>
    <property type="evidence" value="ECO:0000250"/>
    <property type="project" value="UniProtKB"/>
</dbReference>
<dbReference type="GO" id="GO:0071902">
    <property type="term" value="P:positive regulation of protein serine/threonine kinase activity"/>
    <property type="evidence" value="ECO:0000250"/>
    <property type="project" value="UniProtKB"/>
</dbReference>
<dbReference type="GO" id="GO:0090314">
    <property type="term" value="P:positive regulation of protein targeting to membrane"/>
    <property type="evidence" value="ECO:0000250"/>
    <property type="project" value="UniProtKB"/>
</dbReference>
<dbReference type="GO" id="GO:1900026">
    <property type="term" value="P:positive regulation of substrate adhesion-dependent cell spreading"/>
    <property type="evidence" value="ECO:0000250"/>
    <property type="project" value="UniProtKB"/>
</dbReference>
<dbReference type="GO" id="GO:0051302">
    <property type="term" value="P:regulation of cell division"/>
    <property type="evidence" value="ECO:0000250"/>
    <property type="project" value="UniProtKB"/>
</dbReference>
<dbReference type="GO" id="GO:0042127">
    <property type="term" value="P:regulation of cell population proliferation"/>
    <property type="evidence" value="ECO:0000250"/>
    <property type="project" value="UniProtKB"/>
</dbReference>
<dbReference type="GO" id="GO:0002931">
    <property type="term" value="P:response to ischemia"/>
    <property type="evidence" value="ECO:0000250"/>
    <property type="project" value="UniProtKB"/>
</dbReference>
<dbReference type="GO" id="GO:0007286">
    <property type="term" value="P:spermatid development"/>
    <property type="evidence" value="ECO:0000250"/>
    <property type="project" value="UniProtKB"/>
</dbReference>
<dbReference type="GO" id="GO:0038163">
    <property type="term" value="P:thrombopoietin-mediated signaling pathway"/>
    <property type="evidence" value="ECO:0000250"/>
    <property type="project" value="UniProtKB"/>
</dbReference>
<dbReference type="CDD" id="cd00051">
    <property type="entry name" value="EFh"/>
    <property type="match status" value="1"/>
</dbReference>
<dbReference type="FunFam" id="1.10.238.10:FF:000079">
    <property type="entry name" value="Calcium and integrin-binding family member 2"/>
    <property type="match status" value="1"/>
</dbReference>
<dbReference type="Gene3D" id="1.10.238.10">
    <property type="entry name" value="EF-hand"/>
    <property type="match status" value="2"/>
</dbReference>
<dbReference type="InterPro" id="IPR051433">
    <property type="entry name" value="CIBP"/>
</dbReference>
<dbReference type="InterPro" id="IPR011992">
    <property type="entry name" value="EF-hand-dom_pair"/>
</dbReference>
<dbReference type="InterPro" id="IPR018247">
    <property type="entry name" value="EF_Hand_1_Ca_BS"/>
</dbReference>
<dbReference type="InterPro" id="IPR002048">
    <property type="entry name" value="EF_hand_dom"/>
</dbReference>
<dbReference type="PANTHER" id="PTHR45791">
    <property type="entry name" value="CALCIUM AND INTEGRIN BINDING FAMILY MEMBER 2"/>
    <property type="match status" value="1"/>
</dbReference>
<dbReference type="PANTHER" id="PTHR45791:SF3">
    <property type="entry name" value="CALCIUM AND INTEGRIN-BINDING PROTEIN 1"/>
    <property type="match status" value="1"/>
</dbReference>
<dbReference type="Pfam" id="PF13499">
    <property type="entry name" value="EF-hand_7"/>
    <property type="match status" value="1"/>
</dbReference>
<dbReference type="SMART" id="SM00054">
    <property type="entry name" value="EFh"/>
    <property type="match status" value="2"/>
</dbReference>
<dbReference type="SUPFAM" id="SSF47473">
    <property type="entry name" value="EF-hand"/>
    <property type="match status" value="1"/>
</dbReference>
<dbReference type="PROSITE" id="PS00018">
    <property type="entry name" value="EF_HAND_1"/>
    <property type="match status" value="2"/>
</dbReference>
<dbReference type="PROSITE" id="PS50222">
    <property type="entry name" value="EF_HAND_2"/>
    <property type="match status" value="2"/>
</dbReference>
<feature type="initiator methionine" description="Removed">
    <location>
        <position position="1"/>
    </location>
</feature>
<feature type="chain" id="PRO_0000073533" description="Calcium and integrin-binding protein 1">
    <location>
        <begin position="2"/>
        <end position="191"/>
    </location>
</feature>
<feature type="domain" description="EF-hand 1" evidence="3">
    <location>
        <begin position="103"/>
        <end position="138"/>
    </location>
</feature>
<feature type="domain" description="EF-hand 2" evidence="3">
    <location>
        <begin position="148"/>
        <end position="183"/>
    </location>
</feature>
<feature type="binding site" evidence="3">
    <location>
        <position position="116"/>
    </location>
    <ligand>
        <name>Ca(2+)</name>
        <dbReference type="ChEBI" id="CHEBI:29108"/>
        <label>1</label>
    </ligand>
</feature>
<feature type="binding site" evidence="3">
    <location>
        <position position="118"/>
    </location>
    <ligand>
        <name>Ca(2+)</name>
        <dbReference type="ChEBI" id="CHEBI:29108"/>
        <label>1</label>
    </ligand>
</feature>
<feature type="binding site" evidence="3">
    <location>
        <position position="120"/>
    </location>
    <ligand>
        <name>Ca(2+)</name>
        <dbReference type="ChEBI" id="CHEBI:29108"/>
        <label>1</label>
    </ligand>
</feature>
<feature type="binding site" evidence="3">
    <location>
        <position position="122"/>
    </location>
    <ligand>
        <name>Ca(2+)</name>
        <dbReference type="ChEBI" id="CHEBI:29108"/>
        <label>1</label>
    </ligand>
</feature>
<feature type="binding site" evidence="3">
    <location>
        <position position="127"/>
    </location>
    <ligand>
        <name>Ca(2+)</name>
        <dbReference type="ChEBI" id="CHEBI:29108"/>
        <label>1</label>
    </ligand>
</feature>
<feature type="binding site" evidence="3">
    <location>
        <position position="161"/>
    </location>
    <ligand>
        <name>Ca(2+)</name>
        <dbReference type="ChEBI" id="CHEBI:29108"/>
        <label>2</label>
    </ligand>
</feature>
<feature type="binding site" evidence="3">
    <location>
        <position position="163"/>
    </location>
    <ligand>
        <name>Ca(2+)</name>
        <dbReference type="ChEBI" id="CHEBI:29108"/>
        <label>2</label>
    </ligand>
</feature>
<feature type="binding site" evidence="3">
    <location>
        <position position="165"/>
    </location>
    <ligand>
        <name>Ca(2+)</name>
        <dbReference type="ChEBI" id="CHEBI:29108"/>
        <label>2</label>
    </ligand>
</feature>
<feature type="binding site" evidence="3">
    <location>
        <position position="167"/>
    </location>
    <ligand>
        <name>Ca(2+)</name>
        <dbReference type="ChEBI" id="CHEBI:29108"/>
        <label>2</label>
    </ligand>
</feature>
<feature type="binding site" evidence="3">
    <location>
        <position position="172"/>
    </location>
    <ligand>
        <name>Ca(2+)</name>
        <dbReference type="ChEBI" id="CHEBI:29108"/>
        <label>2</label>
    </ligand>
</feature>
<feature type="lipid moiety-binding region" description="N-myristoyl glycine" evidence="4">
    <location>
        <position position="2"/>
    </location>
</feature>
<keyword id="KW-0037">Angiogenesis</keyword>
<keyword id="KW-0053">Apoptosis</keyword>
<keyword id="KW-0106">Calcium</keyword>
<keyword id="KW-0130">Cell adhesion</keyword>
<keyword id="KW-0131">Cell cycle</keyword>
<keyword id="KW-0132">Cell division</keyword>
<keyword id="KW-1003">Cell membrane</keyword>
<keyword id="KW-0966">Cell projection</keyword>
<keyword id="KW-0963">Cytoplasm</keyword>
<keyword id="KW-0206">Cytoskeleton</keyword>
<keyword id="KW-0221">Differentiation</keyword>
<keyword id="KW-0449">Lipoprotein</keyword>
<keyword id="KW-0460">Magnesium</keyword>
<keyword id="KW-0472">Membrane</keyword>
<keyword id="KW-0479">Metal-binding</keyword>
<keyword id="KW-0519">Myristate</keyword>
<keyword id="KW-0539">Nucleus</keyword>
<keyword id="KW-1185">Reference proteome</keyword>
<keyword id="KW-0677">Repeat</keyword>
<keyword id="KW-0744">Spermatogenesis</keyword>